<proteinExistence type="inferred from homology"/>
<comment type="similarity">
    <text evidence="1">Belongs to the SfsA family.</text>
</comment>
<protein>
    <recommendedName>
        <fullName evidence="1">Sugar fermentation stimulation protein homolog</fullName>
    </recommendedName>
</protein>
<feature type="chain" id="PRO_1000007988" description="Sugar fermentation stimulation protein homolog">
    <location>
        <begin position="1"/>
        <end position="241"/>
    </location>
</feature>
<gene>
    <name evidence="1" type="primary">sfsA</name>
    <name type="ordered locus">HCH_06254</name>
</gene>
<organism>
    <name type="scientific">Hahella chejuensis (strain KCTC 2396)</name>
    <dbReference type="NCBI Taxonomy" id="349521"/>
    <lineage>
        <taxon>Bacteria</taxon>
        <taxon>Pseudomonadati</taxon>
        <taxon>Pseudomonadota</taxon>
        <taxon>Gammaproteobacteria</taxon>
        <taxon>Oceanospirillales</taxon>
        <taxon>Hahellaceae</taxon>
        <taxon>Hahella</taxon>
    </lineage>
</organism>
<sequence>MKIDIVPTPGRLLKRYKRFLADIQLPDGAELTIHCPNTGAMTGCAEPGSLVYYSDSGNPARKYRHTWELVETPAGEFACVNTARPNQLVGEAVDAGVIKELQGYPLKKAEVKFGDQNSRADWMLSGSSELPDCYVEVKNVTLCLHGRGYFPDAVSTRGQKHLEELMSVVRNGKRAALVFCVNHSGISVVSPATHIDARYGALLSEAIEAGVEVLAYKSEITPGEIRLTQKLEVTPFDSEAF</sequence>
<accession>Q2S8X2</accession>
<keyword id="KW-1185">Reference proteome</keyword>
<evidence type="ECO:0000255" key="1">
    <source>
        <dbReference type="HAMAP-Rule" id="MF_00095"/>
    </source>
</evidence>
<dbReference type="EMBL" id="CP000155">
    <property type="protein sequence ID" value="ABC32902.1"/>
    <property type="molecule type" value="Genomic_DNA"/>
</dbReference>
<dbReference type="RefSeq" id="WP_011399958.1">
    <property type="nucleotide sequence ID" value="NC_007645.1"/>
</dbReference>
<dbReference type="SMR" id="Q2S8X2"/>
<dbReference type="STRING" id="349521.HCH_06254"/>
<dbReference type="KEGG" id="hch:HCH_06254"/>
<dbReference type="eggNOG" id="COG1489">
    <property type="taxonomic scope" value="Bacteria"/>
</dbReference>
<dbReference type="HOGENOM" id="CLU_052299_2_0_6"/>
<dbReference type="OrthoDB" id="9802365at2"/>
<dbReference type="Proteomes" id="UP000000238">
    <property type="component" value="Chromosome"/>
</dbReference>
<dbReference type="GO" id="GO:0003677">
    <property type="term" value="F:DNA binding"/>
    <property type="evidence" value="ECO:0007669"/>
    <property type="project" value="InterPro"/>
</dbReference>
<dbReference type="CDD" id="cd22359">
    <property type="entry name" value="SfsA-like_bacterial"/>
    <property type="match status" value="1"/>
</dbReference>
<dbReference type="FunFam" id="2.40.50.580:FF:000001">
    <property type="entry name" value="Sugar fermentation stimulation protein A"/>
    <property type="match status" value="1"/>
</dbReference>
<dbReference type="FunFam" id="3.40.1350.60:FF:000001">
    <property type="entry name" value="Sugar fermentation stimulation protein A"/>
    <property type="match status" value="1"/>
</dbReference>
<dbReference type="Gene3D" id="2.40.50.580">
    <property type="match status" value="1"/>
</dbReference>
<dbReference type="Gene3D" id="3.40.1350.60">
    <property type="match status" value="1"/>
</dbReference>
<dbReference type="HAMAP" id="MF_00095">
    <property type="entry name" value="SfsA"/>
    <property type="match status" value="1"/>
</dbReference>
<dbReference type="InterPro" id="IPR005224">
    <property type="entry name" value="SfsA"/>
</dbReference>
<dbReference type="InterPro" id="IPR040452">
    <property type="entry name" value="SfsA_C"/>
</dbReference>
<dbReference type="InterPro" id="IPR041465">
    <property type="entry name" value="SfsA_N"/>
</dbReference>
<dbReference type="NCBIfam" id="TIGR00230">
    <property type="entry name" value="sfsA"/>
    <property type="match status" value="1"/>
</dbReference>
<dbReference type="PANTHER" id="PTHR30545">
    <property type="entry name" value="SUGAR FERMENTATION STIMULATION PROTEIN A"/>
    <property type="match status" value="1"/>
</dbReference>
<dbReference type="PANTHER" id="PTHR30545:SF2">
    <property type="entry name" value="SUGAR FERMENTATION STIMULATION PROTEIN A"/>
    <property type="match status" value="1"/>
</dbReference>
<dbReference type="Pfam" id="PF03749">
    <property type="entry name" value="SfsA"/>
    <property type="match status" value="1"/>
</dbReference>
<dbReference type="Pfam" id="PF17746">
    <property type="entry name" value="SfsA_N"/>
    <property type="match status" value="1"/>
</dbReference>
<name>SFSA_HAHCH</name>
<reference key="1">
    <citation type="journal article" date="2005" name="Nucleic Acids Res.">
        <title>Genomic blueprint of Hahella chejuensis, a marine microbe producing an algicidal agent.</title>
        <authorList>
            <person name="Jeong H."/>
            <person name="Yim J.H."/>
            <person name="Lee C."/>
            <person name="Choi S.-H."/>
            <person name="Park Y.K."/>
            <person name="Yoon S.H."/>
            <person name="Hur C.-G."/>
            <person name="Kang H.-Y."/>
            <person name="Kim D."/>
            <person name="Lee H.H."/>
            <person name="Park K.H."/>
            <person name="Park S.-H."/>
            <person name="Park H.-S."/>
            <person name="Lee H.K."/>
            <person name="Oh T.K."/>
            <person name="Kim J.F."/>
        </authorList>
    </citation>
    <scope>NUCLEOTIDE SEQUENCE [LARGE SCALE GENOMIC DNA]</scope>
    <source>
        <strain>KCTC 2396</strain>
    </source>
</reference>